<feature type="chain" id="PRO_1000063843" description="3-isopropylmalate dehydratase small subunit">
    <location>
        <begin position="1"/>
        <end position="201"/>
    </location>
</feature>
<keyword id="KW-0028">Amino-acid biosynthesis</keyword>
<keyword id="KW-0100">Branched-chain amino acid biosynthesis</keyword>
<keyword id="KW-0432">Leucine biosynthesis</keyword>
<keyword id="KW-0456">Lyase</keyword>
<accession>A6UDX5</accession>
<comment type="function">
    <text evidence="1">Catalyzes the isomerization between 2-isopropylmalate and 3-isopropylmalate, via the formation of 2-isopropylmaleate.</text>
</comment>
<comment type="catalytic activity">
    <reaction evidence="1">
        <text>(2R,3S)-3-isopropylmalate = (2S)-2-isopropylmalate</text>
        <dbReference type="Rhea" id="RHEA:32287"/>
        <dbReference type="ChEBI" id="CHEBI:1178"/>
        <dbReference type="ChEBI" id="CHEBI:35121"/>
        <dbReference type="EC" id="4.2.1.33"/>
    </reaction>
</comment>
<comment type="pathway">
    <text evidence="1">Amino-acid biosynthesis; L-leucine biosynthesis; L-leucine from 3-methyl-2-oxobutanoate: step 2/4.</text>
</comment>
<comment type="subunit">
    <text evidence="1">Heterodimer of LeuC and LeuD.</text>
</comment>
<comment type="similarity">
    <text evidence="1">Belongs to the LeuD family. LeuD type 1 subfamily.</text>
</comment>
<proteinExistence type="inferred from homology"/>
<reference key="1">
    <citation type="submission" date="2007-06" db="EMBL/GenBank/DDBJ databases">
        <title>Complete sequence of Sinorhizobium medicae WSM419 chromosome.</title>
        <authorList>
            <consortium name="US DOE Joint Genome Institute"/>
            <person name="Copeland A."/>
            <person name="Lucas S."/>
            <person name="Lapidus A."/>
            <person name="Barry K."/>
            <person name="Glavina del Rio T."/>
            <person name="Dalin E."/>
            <person name="Tice H."/>
            <person name="Pitluck S."/>
            <person name="Chain P."/>
            <person name="Malfatti S."/>
            <person name="Shin M."/>
            <person name="Vergez L."/>
            <person name="Schmutz J."/>
            <person name="Larimer F."/>
            <person name="Land M."/>
            <person name="Hauser L."/>
            <person name="Kyrpides N."/>
            <person name="Mikhailova N."/>
            <person name="Reeve W.G."/>
            <person name="Richardson P."/>
        </authorList>
    </citation>
    <scope>NUCLEOTIDE SEQUENCE [LARGE SCALE GENOMIC DNA]</scope>
    <source>
        <strain>WSM419</strain>
    </source>
</reference>
<name>LEUD_SINMW</name>
<sequence length="201" mass="21873">MDKFVKLTGVAAPLPVVNIDTDMIIPKDYLKTIKRTGLGTGLFAEARYNEDGSPNPDFVLNKPAYQNAKILVAGDNFGCGSSREHAPWALLDFGIRCVISTSFADIFYNNCFKNGILPIVVSQEDLDKLMDDASRGSNAVLTIDLEALEITGPDGGSIKFEVDAFKRHCLLNGLDDIGLTLEKGRSIDNFEKATAASRPWA</sequence>
<organism>
    <name type="scientific">Sinorhizobium medicae (strain WSM419)</name>
    <name type="common">Ensifer medicae</name>
    <dbReference type="NCBI Taxonomy" id="366394"/>
    <lineage>
        <taxon>Bacteria</taxon>
        <taxon>Pseudomonadati</taxon>
        <taxon>Pseudomonadota</taxon>
        <taxon>Alphaproteobacteria</taxon>
        <taxon>Hyphomicrobiales</taxon>
        <taxon>Rhizobiaceae</taxon>
        <taxon>Sinorhizobium/Ensifer group</taxon>
        <taxon>Sinorhizobium</taxon>
    </lineage>
</organism>
<gene>
    <name evidence="1" type="primary">leuD</name>
    <name type="ordered locus">Smed_3028</name>
</gene>
<evidence type="ECO:0000255" key="1">
    <source>
        <dbReference type="HAMAP-Rule" id="MF_01031"/>
    </source>
</evidence>
<protein>
    <recommendedName>
        <fullName evidence="1">3-isopropylmalate dehydratase small subunit</fullName>
        <ecNumber evidence="1">4.2.1.33</ecNumber>
    </recommendedName>
    <alternativeName>
        <fullName evidence="1">Alpha-IPM isomerase</fullName>
        <shortName evidence="1">IPMI</shortName>
    </alternativeName>
    <alternativeName>
        <fullName evidence="1">Isopropylmalate isomerase</fullName>
    </alternativeName>
</protein>
<dbReference type="EC" id="4.2.1.33" evidence="1"/>
<dbReference type="EMBL" id="CP000738">
    <property type="protein sequence ID" value="ABR61855.1"/>
    <property type="molecule type" value="Genomic_DNA"/>
</dbReference>
<dbReference type="RefSeq" id="WP_012067236.1">
    <property type="nucleotide sequence ID" value="NC_009636.1"/>
</dbReference>
<dbReference type="RefSeq" id="YP_001328690.1">
    <property type="nucleotide sequence ID" value="NC_009636.1"/>
</dbReference>
<dbReference type="SMR" id="A6UDX5"/>
<dbReference type="STRING" id="366394.Smed_3028"/>
<dbReference type="GeneID" id="61610613"/>
<dbReference type="KEGG" id="smd:Smed_3028"/>
<dbReference type="PATRIC" id="fig|366394.8.peg.6254"/>
<dbReference type="eggNOG" id="COG0066">
    <property type="taxonomic scope" value="Bacteria"/>
</dbReference>
<dbReference type="HOGENOM" id="CLU_081378_0_3_5"/>
<dbReference type="OrthoDB" id="9777465at2"/>
<dbReference type="UniPathway" id="UPA00048">
    <property type="reaction ID" value="UER00071"/>
</dbReference>
<dbReference type="Proteomes" id="UP000001108">
    <property type="component" value="Chromosome"/>
</dbReference>
<dbReference type="GO" id="GO:0009316">
    <property type="term" value="C:3-isopropylmalate dehydratase complex"/>
    <property type="evidence" value="ECO:0007669"/>
    <property type="project" value="InterPro"/>
</dbReference>
<dbReference type="GO" id="GO:0003861">
    <property type="term" value="F:3-isopropylmalate dehydratase activity"/>
    <property type="evidence" value="ECO:0007669"/>
    <property type="project" value="UniProtKB-UniRule"/>
</dbReference>
<dbReference type="GO" id="GO:0009098">
    <property type="term" value="P:L-leucine biosynthetic process"/>
    <property type="evidence" value="ECO:0007669"/>
    <property type="project" value="UniProtKB-UniRule"/>
</dbReference>
<dbReference type="CDD" id="cd01577">
    <property type="entry name" value="IPMI_Swivel"/>
    <property type="match status" value="1"/>
</dbReference>
<dbReference type="FunFam" id="3.20.19.10:FF:000003">
    <property type="entry name" value="3-isopropylmalate dehydratase small subunit"/>
    <property type="match status" value="1"/>
</dbReference>
<dbReference type="Gene3D" id="3.20.19.10">
    <property type="entry name" value="Aconitase, domain 4"/>
    <property type="match status" value="1"/>
</dbReference>
<dbReference type="HAMAP" id="MF_01031">
    <property type="entry name" value="LeuD_type1"/>
    <property type="match status" value="1"/>
</dbReference>
<dbReference type="InterPro" id="IPR004431">
    <property type="entry name" value="3-IsopropMal_deHydase_ssu"/>
</dbReference>
<dbReference type="InterPro" id="IPR015928">
    <property type="entry name" value="Aconitase/3IPM_dehydase_swvl"/>
</dbReference>
<dbReference type="InterPro" id="IPR000573">
    <property type="entry name" value="AconitaseA/IPMdHydase_ssu_swvl"/>
</dbReference>
<dbReference type="InterPro" id="IPR033940">
    <property type="entry name" value="IPMI_Swivel"/>
</dbReference>
<dbReference type="InterPro" id="IPR050075">
    <property type="entry name" value="LeuD"/>
</dbReference>
<dbReference type="NCBIfam" id="TIGR00171">
    <property type="entry name" value="leuD"/>
    <property type="match status" value="1"/>
</dbReference>
<dbReference type="NCBIfam" id="NF002458">
    <property type="entry name" value="PRK01641.1"/>
    <property type="match status" value="1"/>
</dbReference>
<dbReference type="PANTHER" id="PTHR43345:SF5">
    <property type="entry name" value="3-ISOPROPYLMALATE DEHYDRATASE SMALL SUBUNIT"/>
    <property type="match status" value="1"/>
</dbReference>
<dbReference type="PANTHER" id="PTHR43345">
    <property type="entry name" value="3-ISOPROPYLMALATE DEHYDRATASE SMALL SUBUNIT 2-RELATED-RELATED"/>
    <property type="match status" value="1"/>
</dbReference>
<dbReference type="Pfam" id="PF00694">
    <property type="entry name" value="Aconitase_C"/>
    <property type="match status" value="1"/>
</dbReference>
<dbReference type="SUPFAM" id="SSF52016">
    <property type="entry name" value="LeuD/IlvD-like"/>
    <property type="match status" value="1"/>
</dbReference>